<evidence type="ECO:0000250" key="1"/>
<evidence type="ECO:0000305" key="2"/>
<gene>
    <name type="primary">ydiO</name>
    <name type="ordered locus">c2090</name>
</gene>
<comment type="catalytic activity">
    <reaction>
        <text>a 2,3-saturated acyl-CoA + A = a 2,3-dehydroacyl-CoA + AH2</text>
        <dbReference type="Rhea" id="RHEA:48608"/>
        <dbReference type="ChEBI" id="CHEBI:13193"/>
        <dbReference type="ChEBI" id="CHEBI:17499"/>
        <dbReference type="ChEBI" id="CHEBI:60015"/>
        <dbReference type="ChEBI" id="CHEBI:65111"/>
    </reaction>
</comment>
<comment type="cofactor">
    <cofactor evidence="1">
        <name>FAD</name>
        <dbReference type="ChEBI" id="CHEBI:57692"/>
    </cofactor>
</comment>
<comment type="similarity">
    <text evidence="2">Belongs to the acyl-CoA dehydrogenase family.</text>
</comment>
<comment type="sequence caution" evidence="2">
    <conflict type="erroneous initiation">
        <sequence resource="EMBL-CDS" id="AAN80550"/>
    </conflict>
</comment>
<name>YDIO_ECOL6</name>
<feature type="chain" id="PRO_0000201208" description="Probable acyl-CoA dehydrogenase YdiO">
    <location>
        <begin position="1"/>
        <end position="383"/>
    </location>
</feature>
<keyword id="KW-0274">FAD</keyword>
<keyword id="KW-0285">Flavoprotein</keyword>
<keyword id="KW-0560">Oxidoreductase</keyword>
<keyword id="KW-1185">Reference proteome</keyword>
<accession>P0A9U9</accession>
<accession>P76200</accession>
<accession>P76897</accession>
<accession>Q8X5X5</accession>
<reference key="1">
    <citation type="journal article" date="2002" name="Proc. Natl. Acad. Sci. U.S.A.">
        <title>Extensive mosaic structure revealed by the complete genome sequence of uropathogenic Escherichia coli.</title>
        <authorList>
            <person name="Welch R.A."/>
            <person name="Burland V."/>
            <person name="Plunkett G. III"/>
            <person name="Redford P."/>
            <person name="Roesch P."/>
            <person name="Rasko D."/>
            <person name="Buckles E.L."/>
            <person name="Liou S.-R."/>
            <person name="Boutin A."/>
            <person name="Hackett J."/>
            <person name="Stroud D."/>
            <person name="Mayhew G.F."/>
            <person name="Rose D.J."/>
            <person name="Zhou S."/>
            <person name="Schwartz D.C."/>
            <person name="Perna N.T."/>
            <person name="Mobley H.L.T."/>
            <person name="Donnenberg M.S."/>
            <person name="Blattner F.R."/>
        </authorList>
    </citation>
    <scope>NUCLEOTIDE SEQUENCE [LARGE SCALE GENOMIC DNA]</scope>
    <source>
        <strain>CFT073 / ATCC 700928 / UPEC</strain>
    </source>
</reference>
<organism>
    <name type="scientific">Escherichia coli O6:H1 (strain CFT073 / ATCC 700928 / UPEC)</name>
    <dbReference type="NCBI Taxonomy" id="199310"/>
    <lineage>
        <taxon>Bacteria</taxon>
        <taxon>Pseudomonadati</taxon>
        <taxon>Pseudomonadota</taxon>
        <taxon>Gammaproteobacteria</taxon>
        <taxon>Enterobacterales</taxon>
        <taxon>Enterobacteriaceae</taxon>
        <taxon>Escherichia</taxon>
    </lineage>
</organism>
<dbReference type="EC" id="1.3.-.-"/>
<dbReference type="EMBL" id="AE014075">
    <property type="protein sequence ID" value="AAN80550.1"/>
    <property type="status" value="ALT_INIT"/>
    <property type="molecule type" value="Genomic_DNA"/>
</dbReference>
<dbReference type="RefSeq" id="WP_000347850.1">
    <property type="nucleotide sequence ID" value="NZ_CP051263.1"/>
</dbReference>
<dbReference type="SMR" id="P0A9U9"/>
<dbReference type="STRING" id="199310.c2090"/>
<dbReference type="KEGG" id="ecc:c2090"/>
<dbReference type="eggNOG" id="COG1960">
    <property type="taxonomic scope" value="Bacteria"/>
</dbReference>
<dbReference type="HOGENOM" id="CLU_018204_0_2_6"/>
<dbReference type="Proteomes" id="UP000001410">
    <property type="component" value="Chromosome"/>
</dbReference>
<dbReference type="GO" id="GO:0003995">
    <property type="term" value="F:acyl-CoA dehydrogenase activity"/>
    <property type="evidence" value="ECO:0007669"/>
    <property type="project" value="InterPro"/>
</dbReference>
<dbReference type="GO" id="GO:0050660">
    <property type="term" value="F:flavin adenine dinucleotide binding"/>
    <property type="evidence" value="ECO:0007669"/>
    <property type="project" value="InterPro"/>
</dbReference>
<dbReference type="CDD" id="cd00567">
    <property type="entry name" value="ACAD"/>
    <property type="match status" value="1"/>
</dbReference>
<dbReference type="FunFam" id="1.20.140.10:FF:000001">
    <property type="entry name" value="Acyl-CoA dehydrogenase"/>
    <property type="match status" value="1"/>
</dbReference>
<dbReference type="FunFam" id="2.40.110.10:FF:000002">
    <property type="entry name" value="Acyl-CoA dehydrogenase fadE12"/>
    <property type="match status" value="1"/>
</dbReference>
<dbReference type="FunFam" id="1.10.540.10:FF:000011">
    <property type="entry name" value="Predicted acyl-CoA dehydrogenase"/>
    <property type="match status" value="1"/>
</dbReference>
<dbReference type="Gene3D" id="1.10.540.10">
    <property type="entry name" value="Acyl-CoA dehydrogenase/oxidase, N-terminal domain"/>
    <property type="match status" value="1"/>
</dbReference>
<dbReference type="Gene3D" id="2.40.110.10">
    <property type="entry name" value="Butyryl-CoA Dehydrogenase, subunit A, domain 2"/>
    <property type="match status" value="1"/>
</dbReference>
<dbReference type="Gene3D" id="1.20.140.10">
    <property type="entry name" value="Butyryl-CoA Dehydrogenase, subunit A, domain 3"/>
    <property type="match status" value="1"/>
</dbReference>
<dbReference type="InterPro" id="IPR006089">
    <property type="entry name" value="Acyl-CoA_DH_CS"/>
</dbReference>
<dbReference type="InterPro" id="IPR006091">
    <property type="entry name" value="Acyl-CoA_Oxase/DH_mid-dom"/>
</dbReference>
<dbReference type="InterPro" id="IPR046373">
    <property type="entry name" value="Acyl-CoA_Oxase/DH_mid-dom_sf"/>
</dbReference>
<dbReference type="InterPro" id="IPR036250">
    <property type="entry name" value="AcylCo_DH-like_C"/>
</dbReference>
<dbReference type="InterPro" id="IPR009075">
    <property type="entry name" value="AcylCo_DH/oxidase_C"/>
</dbReference>
<dbReference type="InterPro" id="IPR013786">
    <property type="entry name" value="AcylCoA_DH/ox_N"/>
</dbReference>
<dbReference type="InterPro" id="IPR037069">
    <property type="entry name" value="AcylCoA_DH/ox_N_sf"/>
</dbReference>
<dbReference type="InterPro" id="IPR009100">
    <property type="entry name" value="AcylCoA_DH/oxidase_NM_dom_sf"/>
</dbReference>
<dbReference type="NCBIfam" id="NF008997">
    <property type="entry name" value="PRK12341.1"/>
    <property type="match status" value="1"/>
</dbReference>
<dbReference type="PANTHER" id="PTHR43884">
    <property type="entry name" value="ACYL-COA DEHYDROGENASE"/>
    <property type="match status" value="1"/>
</dbReference>
<dbReference type="PANTHER" id="PTHR43884:SF37">
    <property type="entry name" value="ACYL-COA DEHYDROGENASE"/>
    <property type="match status" value="1"/>
</dbReference>
<dbReference type="Pfam" id="PF00441">
    <property type="entry name" value="Acyl-CoA_dh_1"/>
    <property type="match status" value="1"/>
</dbReference>
<dbReference type="Pfam" id="PF02770">
    <property type="entry name" value="Acyl-CoA_dh_M"/>
    <property type="match status" value="1"/>
</dbReference>
<dbReference type="Pfam" id="PF02771">
    <property type="entry name" value="Acyl-CoA_dh_N"/>
    <property type="match status" value="1"/>
</dbReference>
<dbReference type="PIRSF" id="PIRSF016578">
    <property type="entry name" value="HsaA"/>
    <property type="match status" value="1"/>
</dbReference>
<dbReference type="SUPFAM" id="SSF47203">
    <property type="entry name" value="Acyl-CoA dehydrogenase C-terminal domain-like"/>
    <property type="match status" value="1"/>
</dbReference>
<dbReference type="SUPFAM" id="SSF56645">
    <property type="entry name" value="Acyl-CoA dehydrogenase NM domain-like"/>
    <property type="match status" value="1"/>
</dbReference>
<dbReference type="PROSITE" id="PS00072">
    <property type="entry name" value="ACYL_COA_DH_1"/>
    <property type="match status" value="1"/>
</dbReference>
<dbReference type="PROSITE" id="PS00073">
    <property type="entry name" value="ACYL_COA_DH_2"/>
    <property type="match status" value="1"/>
</dbReference>
<sequence length="383" mass="43002">MDFSLTEEQELLLASIRELITTNFPEEYFRTCDQNGTYPREFMRALADNGISMLGVPEEFGGIPADYVTQMLALMEVSKCGAPAFLITNGQCIHSMRRFGSAEQLRKTAESTLETGDPAYALALTEPGAGSDNNSATTTYTRKNGKVYINGQKTFITGAKEYPYMLVLARDPQPKDPKKAFTLWWVDSSKPGIKINPLHKIGWHMLSTCEVYLDNVEVEESDMVGEEGMGFLNVMYNFEMERLINAARSTGFAECAFEDAARYANQRIAFGKPIGHNQMIQEKLALMAIKIDNMRNMVLKVAWQADQHQSLRTSAALAKLYCARTAMEVIDDAIQIMGGLGYTDEARVSRFWRDVRCERIGGGTDEIMIYVAGRQILKDYQNK</sequence>
<proteinExistence type="inferred from homology"/>
<protein>
    <recommendedName>
        <fullName>Probable acyl-CoA dehydrogenase YdiO</fullName>
        <ecNumber>1.3.-.-</ecNumber>
    </recommendedName>
</protein>